<dbReference type="EMBL" id="AB090874">
    <property type="protein sequence ID" value="BAC10690.1"/>
    <property type="molecule type" value="Transcribed_RNA"/>
</dbReference>
<dbReference type="EMBL" id="AL138651">
    <property type="protein sequence ID" value="CAB71869.1"/>
    <property type="status" value="ALT_SEQ"/>
    <property type="molecule type" value="Genomic_DNA"/>
</dbReference>
<dbReference type="EMBL" id="CP002686">
    <property type="protein sequence ID" value="AEE80306.1"/>
    <property type="molecule type" value="Genomic_DNA"/>
</dbReference>
<dbReference type="EMBL" id="CP002686">
    <property type="protein sequence ID" value="AEE80307.1"/>
    <property type="molecule type" value="Genomic_DNA"/>
</dbReference>
<dbReference type="EMBL" id="BT033108">
    <property type="protein sequence ID" value="ACF16169.1"/>
    <property type="molecule type" value="mRNA"/>
</dbReference>
<dbReference type="PIR" id="T48001">
    <property type="entry name" value="T48001"/>
</dbReference>
<dbReference type="RefSeq" id="NP_001078329.1">
    <molecule id="Q8L5W7-1"/>
    <property type="nucleotide sequence ID" value="NM_001084860.1"/>
</dbReference>
<dbReference type="RefSeq" id="NP_191768.2">
    <molecule id="Q8L5W7-2"/>
    <property type="nucleotide sequence ID" value="NM_116074.2"/>
</dbReference>
<dbReference type="PDB" id="8YB4">
    <property type="method" value="EM"/>
    <property type="resolution" value="3.10 A"/>
    <property type="chains" value="C=1-100"/>
</dbReference>
<dbReference type="PDB" id="9IUZ">
    <property type="method" value="EM"/>
    <property type="resolution" value="3.19 A"/>
    <property type="chains" value="C=1-100"/>
</dbReference>
<dbReference type="PDBsum" id="8YB4"/>
<dbReference type="PDBsum" id="9IUZ"/>
<dbReference type="EMDB" id="EMD-39108"/>
<dbReference type="EMDB" id="EMD-60916"/>
<dbReference type="SMR" id="Q8L5W7"/>
<dbReference type="BioGRID" id="10696">
    <property type="interactions" value="7"/>
</dbReference>
<dbReference type="FunCoup" id="Q8L5W7">
    <property type="interactions" value="38"/>
</dbReference>
<dbReference type="IntAct" id="Q8L5W7">
    <property type="interactions" value="2"/>
</dbReference>
<dbReference type="STRING" id="3702.Q8L5W7"/>
<dbReference type="GlyGen" id="Q8L5W7">
    <property type="glycosylation" value="1 site"/>
</dbReference>
<dbReference type="PaxDb" id="3702-AT3G62090.2"/>
<dbReference type="EnsemblPlants" id="AT3G62090.1">
    <molecule id="Q8L5W7-2"/>
    <property type="protein sequence ID" value="AT3G62090.1"/>
    <property type="gene ID" value="AT3G62090"/>
</dbReference>
<dbReference type="EnsemblPlants" id="AT3G62090.2">
    <molecule id="Q8L5W7-1"/>
    <property type="protein sequence ID" value="AT3G62090.2"/>
    <property type="gene ID" value="AT3G62090"/>
</dbReference>
<dbReference type="GeneID" id="825382"/>
<dbReference type="Gramene" id="AT3G62090.1">
    <molecule id="Q8L5W7-2"/>
    <property type="protein sequence ID" value="AT3G62090.1"/>
    <property type="gene ID" value="AT3G62090"/>
</dbReference>
<dbReference type="Gramene" id="AT3G62090.2">
    <molecule id="Q8L5W7-1"/>
    <property type="protein sequence ID" value="AT3G62090.2"/>
    <property type="gene ID" value="AT3G62090"/>
</dbReference>
<dbReference type="KEGG" id="ath:AT3G62090"/>
<dbReference type="Araport" id="AT3G62090"/>
<dbReference type="TAIR" id="AT3G62090">
    <property type="gene designation" value="PIL2"/>
</dbReference>
<dbReference type="eggNOG" id="ENOG502QV9I">
    <property type="taxonomic scope" value="Eukaryota"/>
</dbReference>
<dbReference type="InParanoid" id="Q8L5W7"/>
<dbReference type="OMA" id="NSHEDDN"/>
<dbReference type="OrthoDB" id="1049034at2759"/>
<dbReference type="PhylomeDB" id="Q8L5W7"/>
<dbReference type="PRO" id="PR:Q8L5W7"/>
<dbReference type="Proteomes" id="UP000006548">
    <property type="component" value="Chromosome 3"/>
</dbReference>
<dbReference type="ExpressionAtlas" id="Q8L5W7">
    <property type="expression patterns" value="baseline and differential"/>
</dbReference>
<dbReference type="GO" id="GO:0005634">
    <property type="term" value="C:nucleus"/>
    <property type="evidence" value="ECO:0007669"/>
    <property type="project" value="UniProtKB-SubCell"/>
</dbReference>
<dbReference type="GO" id="GO:0003677">
    <property type="term" value="F:DNA binding"/>
    <property type="evidence" value="ECO:0007669"/>
    <property type="project" value="UniProtKB-KW"/>
</dbReference>
<dbReference type="GO" id="GO:0003700">
    <property type="term" value="F:DNA-binding transcription factor activity"/>
    <property type="evidence" value="ECO:0000250"/>
    <property type="project" value="TAIR"/>
</dbReference>
<dbReference type="GO" id="GO:0046983">
    <property type="term" value="F:protein dimerization activity"/>
    <property type="evidence" value="ECO:0007669"/>
    <property type="project" value="InterPro"/>
</dbReference>
<dbReference type="GO" id="GO:0010017">
    <property type="term" value="P:red or far-red light signaling pathway"/>
    <property type="evidence" value="ECO:0000270"/>
    <property type="project" value="TAIR"/>
</dbReference>
<dbReference type="GO" id="GO:0009737">
    <property type="term" value="P:response to abscisic acid"/>
    <property type="evidence" value="ECO:0000270"/>
    <property type="project" value="UniProtKB"/>
</dbReference>
<dbReference type="GO" id="GO:1902074">
    <property type="term" value="P:response to salt"/>
    <property type="evidence" value="ECO:0000270"/>
    <property type="project" value="UniProtKB"/>
</dbReference>
<dbReference type="CDD" id="cd11445">
    <property type="entry name" value="bHLH_AtPIF_like"/>
    <property type="match status" value="1"/>
</dbReference>
<dbReference type="Gene3D" id="4.10.280.10">
    <property type="entry name" value="Helix-loop-helix DNA-binding domain"/>
    <property type="match status" value="1"/>
</dbReference>
<dbReference type="InterPro" id="IPR011598">
    <property type="entry name" value="bHLH_dom"/>
</dbReference>
<dbReference type="InterPro" id="IPR036638">
    <property type="entry name" value="HLH_DNA-bd_sf"/>
</dbReference>
<dbReference type="InterPro" id="IPR047265">
    <property type="entry name" value="PIF1-like_bHLH"/>
</dbReference>
<dbReference type="InterPro" id="IPR044273">
    <property type="entry name" value="PIF3-like"/>
</dbReference>
<dbReference type="PANTHER" id="PTHR46807">
    <property type="entry name" value="TRANSCRIPTION FACTOR PIF3"/>
    <property type="match status" value="1"/>
</dbReference>
<dbReference type="PANTHER" id="PTHR46807:SF1">
    <property type="entry name" value="TRANSCRIPTION FACTOR PIF3"/>
    <property type="match status" value="1"/>
</dbReference>
<dbReference type="Pfam" id="PF00010">
    <property type="entry name" value="HLH"/>
    <property type="match status" value="1"/>
</dbReference>
<dbReference type="SMART" id="SM00353">
    <property type="entry name" value="HLH"/>
    <property type="match status" value="1"/>
</dbReference>
<dbReference type="SUPFAM" id="SSF47459">
    <property type="entry name" value="HLH, helix-loop-helix DNA-binding domain"/>
    <property type="match status" value="1"/>
</dbReference>
<dbReference type="PROSITE" id="PS50888">
    <property type="entry name" value="BHLH"/>
    <property type="match status" value="1"/>
</dbReference>
<proteinExistence type="evidence at protein level"/>
<sequence length="363" mass="40547">MMFLPTDYCCRLSDQEYMELVFENGQILAKGQRSNVSLHNQRTKSIMDLYEAEYNEDFMKSIIHGGGGAITNLGDTQVVPQSHVAAAHETNMLESNKHVDDSETLKASSSKRMMVDYHNRKKIKFIPPDEQSVVADRSFKLGFDTSSVGFTEDSEGSMYLSSSLDDESDDARPQVPARTRKALVKRKRNAEAYNSPERNQRNDINKKMRTLQNLLPNSHKDDNESMLDEAINYMTNLQLQVQMMTMGNRFVTPSMMMPLGPNYSQMGLAMGVGMQMGEQQFLPAHVLGAGLPGINDSADMLRFLNHPGLMPMQNSAPFIPTENCSPQSVPPSCAAFPNQIPNPNSLSNLDGATLHKKSRKTNR</sequence>
<keyword id="KW-0002">3D-structure</keyword>
<keyword id="KW-0025">Alternative splicing</keyword>
<keyword id="KW-0238">DNA-binding</keyword>
<keyword id="KW-0539">Nucleus</keyword>
<keyword id="KW-1185">Reference proteome</keyword>
<keyword id="KW-0804">Transcription</keyword>
<keyword id="KW-0805">Transcription regulation</keyword>
<organism>
    <name type="scientific">Arabidopsis thaliana</name>
    <name type="common">Mouse-ear cress</name>
    <dbReference type="NCBI Taxonomy" id="3702"/>
    <lineage>
        <taxon>Eukaryota</taxon>
        <taxon>Viridiplantae</taxon>
        <taxon>Streptophyta</taxon>
        <taxon>Embryophyta</taxon>
        <taxon>Tracheophyta</taxon>
        <taxon>Spermatophyta</taxon>
        <taxon>Magnoliopsida</taxon>
        <taxon>eudicotyledons</taxon>
        <taxon>Gunneridae</taxon>
        <taxon>Pentapetalae</taxon>
        <taxon>rosids</taxon>
        <taxon>malvids</taxon>
        <taxon>Brassicales</taxon>
        <taxon>Brassicaceae</taxon>
        <taxon>Camelineae</taxon>
        <taxon>Arabidopsis</taxon>
    </lineage>
</organism>
<comment type="function">
    <text evidence="1">Transcription factor.</text>
</comment>
<comment type="subunit">
    <text evidence="1 4 5 7 13">Homodimer (By similarity). Interacts with APRR1/TOC1. Binds to RGL2 and RGA (PubMed:12826627, PubMed:20093430). Associates to PTAC12/HMR/PAP5 which acts as a transcriptional coactivator (PubMed:25944101).</text>
</comment>
<comment type="subcellular location">
    <subcellularLocation>
        <location evidence="2">Nucleus</location>
    </subcellularLocation>
</comment>
<comment type="alternative products">
    <event type="alternative splicing"/>
    <isoform>
        <id>Q8L5W7-1</id>
        <name>1</name>
        <sequence type="displayed"/>
    </isoform>
    <isoform>
        <id>Q8L5W7-2</id>
        <name>2</name>
        <sequence type="described" ref="VSP_036113"/>
    </isoform>
</comment>
<comment type="tissue specificity">
    <text evidence="6">Mainly expressed in fruits and flowers and, to a lower extent, in leaves, stems, seedlings and roots.</text>
</comment>
<comment type="developmental stage">
    <text evidence="6">Accumulates progressively in maturating seeds to reach a peak in dry seeds (PubMed:23708772). Fades out upon seed imbibition (PubMed:23708772).</text>
</comment>
<comment type="induction">
    <text evidence="6">Up-regulated by abscisic acid (ABA) and salt (NaCl).</text>
</comment>
<comment type="sequence caution" evidence="13">
    <conflict type="erroneous gene model prediction">
        <sequence resource="EMBL-CDS" id="CAB71869"/>
    </conflict>
</comment>
<accession>Q8L5W7</accession>
<accession>A8MSC2</accession>
<accession>Q9M1R5</accession>
<protein>
    <recommendedName>
        <fullName evidence="11">Transcription factor PIF6</fullName>
    </recommendedName>
    <alternativeName>
        <fullName evidence="8">Basic helix-loop-helix protein 132</fullName>
        <shortName evidence="8">AtbHLH132</shortName>
        <shortName evidence="8">bHLH 132</shortName>
    </alternativeName>
    <alternativeName>
        <fullName evidence="9">Phytochrome interacting factor 3-like 2</fullName>
    </alternativeName>
    <alternativeName>
        <fullName evidence="11">Phytochrome-interacting factor 6</fullName>
    </alternativeName>
    <alternativeName>
        <fullName evidence="10">Transcription factor EN 111</fullName>
    </alternativeName>
    <alternativeName>
        <fullName evidence="8">bHLH transcription factor bHLH132</fullName>
    </alternativeName>
</protein>
<reference key="1">
    <citation type="journal article" date="2002" name="Plant Cell Physiol.">
        <title>The APRR1/TOC1 quintet implicated in circadian rhythms of Arabidopsis thaliana: I. Characterization with APRR1-overexpressing plants.</title>
        <authorList>
            <person name="Makino S."/>
            <person name="Matsushika A."/>
            <person name="Kojima M."/>
            <person name="Yamashino T."/>
            <person name="Mizuno T."/>
        </authorList>
    </citation>
    <scope>NUCLEOTIDE SEQUENCE [MRNA] (ISOFORM 1)</scope>
</reference>
<reference key="2">
    <citation type="journal article" date="2000" name="Nature">
        <title>Sequence and analysis of chromosome 3 of the plant Arabidopsis thaliana.</title>
        <authorList>
            <person name="Salanoubat M."/>
            <person name="Lemcke K."/>
            <person name="Rieger M."/>
            <person name="Ansorge W."/>
            <person name="Unseld M."/>
            <person name="Fartmann B."/>
            <person name="Valle G."/>
            <person name="Bloecker H."/>
            <person name="Perez-Alonso M."/>
            <person name="Obermaier B."/>
            <person name="Delseny M."/>
            <person name="Boutry M."/>
            <person name="Grivell L.A."/>
            <person name="Mache R."/>
            <person name="Puigdomenech P."/>
            <person name="De Simone V."/>
            <person name="Choisne N."/>
            <person name="Artiguenave F."/>
            <person name="Robert C."/>
            <person name="Brottier P."/>
            <person name="Wincker P."/>
            <person name="Cattolico L."/>
            <person name="Weissenbach J."/>
            <person name="Saurin W."/>
            <person name="Quetier F."/>
            <person name="Schaefer M."/>
            <person name="Mueller-Auer S."/>
            <person name="Gabel C."/>
            <person name="Fuchs M."/>
            <person name="Benes V."/>
            <person name="Wurmbach E."/>
            <person name="Drzonek H."/>
            <person name="Erfle H."/>
            <person name="Jordan N."/>
            <person name="Bangert S."/>
            <person name="Wiedelmann R."/>
            <person name="Kranz H."/>
            <person name="Voss H."/>
            <person name="Holland R."/>
            <person name="Brandt P."/>
            <person name="Nyakatura G."/>
            <person name="Vezzi A."/>
            <person name="D'Angelo M."/>
            <person name="Pallavicini A."/>
            <person name="Toppo S."/>
            <person name="Simionati B."/>
            <person name="Conrad A."/>
            <person name="Hornischer K."/>
            <person name="Kauer G."/>
            <person name="Loehnert T.-H."/>
            <person name="Nordsiek G."/>
            <person name="Reichelt J."/>
            <person name="Scharfe M."/>
            <person name="Schoen O."/>
            <person name="Bargues M."/>
            <person name="Terol J."/>
            <person name="Climent J."/>
            <person name="Navarro P."/>
            <person name="Collado C."/>
            <person name="Perez-Perez A."/>
            <person name="Ottenwaelder B."/>
            <person name="Duchemin D."/>
            <person name="Cooke R."/>
            <person name="Laudie M."/>
            <person name="Berger-Llauro C."/>
            <person name="Purnelle B."/>
            <person name="Masuy D."/>
            <person name="de Haan M."/>
            <person name="Maarse A.C."/>
            <person name="Alcaraz J.-P."/>
            <person name="Cottet A."/>
            <person name="Casacuberta E."/>
            <person name="Monfort A."/>
            <person name="Argiriou A."/>
            <person name="Flores M."/>
            <person name="Liguori R."/>
            <person name="Vitale D."/>
            <person name="Mannhaupt G."/>
            <person name="Haase D."/>
            <person name="Schoof H."/>
            <person name="Rudd S."/>
            <person name="Zaccaria P."/>
            <person name="Mewes H.-W."/>
            <person name="Mayer K.F.X."/>
            <person name="Kaul S."/>
            <person name="Town C.D."/>
            <person name="Koo H.L."/>
            <person name="Tallon L.J."/>
            <person name="Jenkins J."/>
            <person name="Rooney T."/>
            <person name="Rizzo M."/>
            <person name="Walts A."/>
            <person name="Utterback T."/>
            <person name="Fujii C.Y."/>
            <person name="Shea T.P."/>
            <person name="Creasy T.H."/>
            <person name="Haas B."/>
            <person name="Maiti R."/>
            <person name="Wu D."/>
            <person name="Peterson J."/>
            <person name="Van Aken S."/>
            <person name="Pai G."/>
            <person name="Militscher J."/>
            <person name="Sellers P."/>
            <person name="Gill J.E."/>
            <person name="Feldblyum T.V."/>
            <person name="Preuss D."/>
            <person name="Lin X."/>
            <person name="Nierman W.C."/>
            <person name="Salzberg S.L."/>
            <person name="White O."/>
            <person name="Venter J.C."/>
            <person name="Fraser C.M."/>
            <person name="Kaneko T."/>
            <person name="Nakamura Y."/>
            <person name="Sato S."/>
            <person name="Kato T."/>
            <person name="Asamizu E."/>
            <person name="Sasamoto S."/>
            <person name="Kimura T."/>
            <person name="Idesawa K."/>
            <person name="Kawashima K."/>
            <person name="Kishida Y."/>
            <person name="Kiyokawa C."/>
            <person name="Kohara M."/>
            <person name="Matsumoto M."/>
            <person name="Matsuno A."/>
            <person name="Muraki A."/>
            <person name="Nakayama S."/>
            <person name="Nakazaki N."/>
            <person name="Shinpo S."/>
            <person name="Takeuchi C."/>
            <person name="Wada T."/>
            <person name="Watanabe A."/>
            <person name="Yamada M."/>
            <person name="Yasuda M."/>
            <person name="Tabata S."/>
        </authorList>
    </citation>
    <scope>NUCLEOTIDE SEQUENCE [LARGE SCALE GENOMIC DNA]</scope>
    <source>
        <strain>cv. Columbia</strain>
    </source>
</reference>
<reference key="3">
    <citation type="journal article" date="2017" name="Plant J.">
        <title>Araport11: a complete reannotation of the Arabidopsis thaliana reference genome.</title>
        <authorList>
            <person name="Cheng C.Y."/>
            <person name="Krishnakumar V."/>
            <person name="Chan A.P."/>
            <person name="Thibaud-Nissen F."/>
            <person name="Schobel S."/>
            <person name="Town C.D."/>
        </authorList>
    </citation>
    <scope>GENOME REANNOTATION</scope>
    <source>
        <strain>cv. Columbia</strain>
    </source>
</reference>
<reference key="4">
    <citation type="submission" date="2008-06" db="EMBL/GenBank/DDBJ databases">
        <title>Arabidopsis ORF clones.</title>
        <authorList>
            <person name="De Los Reyes C."/>
            <person name="Quan R."/>
            <person name="Chen H."/>
            <person name="Bautista V.R."/>
            <person name="Kim C.J."/>
            <person name="Ecker J.R."/>
        </authorList>
    </citation>
    <scope>NUCLEOTIDE SEQUENCE [LARGE SCALE MRNA] (ISOFORM 2)</scope>
    <source>
        <strain>cv. Columbia</strain>
    </source>
</reference>
<reference key="5">
    <citation type="journal article" date="2003" name="Mol. Biol. Evol.">
        <title>The basic helix-loop-helix transcription factor family in plants: a genome-wide study of protein structure and functional diversity.</title>
        <authorList>
            <person name="Heim M.A."/>
            <person name="Jakoby M."/>
            <person name="Werber M."/>
            <person name="Martin C."/>
            <person name="Weisshaar B."/>
            <person name="Bailey P.C."/>
        </authorList>
    </citation>
    <scope>GENE FAMILY</scope>
    <scope>NOMENCLATURE</scope>
</reference>
<reference key="6">
    <citation type="journal article" date="2003" name="Plant Cell">
        <title>The Arabidopsis basic/helix-loop-helix transcription factor family.</title>
        <authorList>
            <person name="Toledo-Ortiz G."/>
            <person name="Huq E."/>
            <person name="Quail P.H."/>
        </authorList>
    </citation>
    <scope>GENE FAMILY</scope>
</reference>
<reference key="7">
    <citation type="journal article" date="2003" name="Plant Cell">
        <title>Update on the basic helix-loop-helix transcription factor gene family in Arabidopsis thaliana.</title>
        <authorList>
            <person name="Bailey P.C."/>
            <person name="Martin C."/>
            <person name="Toledo-Ortiz G."/>
            <person name="Quail P.H."/>
            <person name="Huq E."/>
            <person name="Heim M.A."/>
            <person name="Jakoby M."/>
            <person name="Werber M."/>
            <person name="Weisshaar B."/>
        </authorList>
    </citation>
    <scope>GENE FAMILY</scope>
    <scope>NOMENCLATURE</scope>
</reference>
<reference key="8">
    <citation type="journal article" date="2003" name="Plant Cell Physiol.">
        <title>A link between circadian-controlled bHLH factors and the APRR1/TOC1 quintet in Arabidopsis thaliana.</title>
        <authorList>
            <person name="Yamashino T."/>
            <person name="Matsushika A."/>
            <person name="Fujimori T."/>
            <person name="Sato S."/>
            <person name="Kato T."/>
            <person name="Tabata S."/>
            <person name="Mizuno T."/>
        </authorList>
    </citation>
    <scope>INTERACTION WITH APRR1/TOC1</scope>
</reference>
<reference key="9">
    <citation type="journal article" date="2010" name="Mol. Biol. Evol.">
        <title>Transcriptional diversification and functional conservation between DELLA proteins in Arabidopsis.</title>
        <authorList>
            <person name="Gallego-Bartolome J."/>
            <person name="Minguet E.G."/>
            <person name="Marin J.A."/>
            <person name="Prat S."/>
            <person name="Blazquez M.A."/>
            <person name="Alabadi D."/>
        </authorList>
    </citation>
    <scope>INTERACTION WITH RGL2 AND RGA</scope>
    <source>
        <strain>cv. Landsberg erecta</strain>
    </source>
</reference>
<reference key="10">
    <citation type="journal article" date="2013" name="Mol. Cells">
        <title>Phytochrome-interacting factors have both shared and distinct biological roles.</title>
        <authorList>
            <person name="Jeong J."/>
            <person name="Choi G."/>
        </authorList>
    </citation>
    <scope>TISSUE SPECIFICITY</scope>
    <scope>DEVELOPMENTAL STAGE</scope>
    <scope>INDUCTION BY SALT AND ABSCISIC ACID</scope>
    <scope>GENE FAMILY</scope>
    <scope>NOMENCLATURE</scope>
    <scope>REVIEW</scope>
</reference>
<reference key="11">
    <citation type="journal article" date="2015" name="Plant Cell">
        <title>HEMERA couples the proteolysis and transcriptional activity of PHYTOCHROME INTERACTING FACTORs in Arabidopsis photomorphogenesis.</title>
        <authorList>
            <person name="Qiu Y."/>
            <person name="Li M."/>
            <person name="Pasoreck E.K."/>
            <person name="Long L."/>
            <person name="Shi Y."/>
            <person name="Galvao R.M."/>
            <person name="Chou C.L."/>
            <person name="Wang H."/>
            <person name="Sun A.Y."/>
            <person name="Zhang Y.C."/>
            <person name="Jiang A."/>
            <person name="Chen M."/>
        </authorList>
    </citation>
    <scope>INTERACTION WITH PTAC12/HMR/PAP5</scope>
    <source>
        <strain>cv. Columbia</strain>
    </source>
</reference>
<gene>
    <name evidence="11" type="primary">PIF6</name>
    <name evidence="8" type="synonym">BHLH132</name>
    <name evidence="10" type="synonym">EN111</name>
    <name evidence="9" type="synonym">PIL2</name>
    <name evidence="14" type="ordered locus">At3g62090</name>
    <name evidence="15" type="ORF">T17J13.50</name>
</gene>
<name>PIF6_ARATH</name>
<evidence type="ECO:0000250" key="1">
    <source>
        <dbReference type="UniProtKB" id="Q8GZM7"/>
    </source>
</evidence>
<evidence type="ECO:0000255" key="2">
    <source>
        <dbReference type="PROSITE-ProRule" id="PRU00981"/>
    </source>
</evidence>
<evidence type="ECO:0000256" key="3">
    <source>
        <dbReference type="SAM" id="MobiDB-lite"/>
    </source>
</evidence>
<evidence type="ECO:0000269" key="4">
    <source>
    </source>
</evidence>
<evidence type="ECO:0000269" key="5">
    <source>
    </source>
</evidence>
<evidence type="ECO:0000269" key="6">
    <source>
    </source>
</evidence>
<evidence type="ECO:0000269" key="7">
    <source>
    </source>
</evidence>
<evidence type="ECO:0000303" key="8">
    <source>
    </source>
</evidence>
<evidence type="ECO:0000303" key="9">
    <source>
    </source>
</evidence>
<evidence type="ECO:0000303" key="10">
    <source>
    </source>
</evidence>
<evidence type="ECO:0000303" key="11">
    <source>
    </source>
</evidence>
<evidence type="ECO:0000303" key="12">
    <source ref="4"/>
</evidence>
<evidence type="ECO:0000305" key="13"/>
<evidence type="ECO:0000312" key="14">
    <source>
        <dbReference type="Araport" id="AT3G62090"/>
    </source>
</evidence>
<evidence type="ECO:0000312" key="15">
    <source>
        <dbReference type="EMBL" id="CAB71869.1"/>
    </source>
</evidence>
<evidence type="ECO:0007829" key="16">
    <source>
        <dbReference type="PDB" id="8YB4"/>
    </source>
</evidence>
<feature type="chain" id="PRO_0000358852" description="Transcription factor PIF6">
    <location>
        <begin position="1"/>
        <end position="363"/>
    </location>
</feature>
<feature type="domain" description="bHLH" evidence="2">
    <location>
        <begin position="188"/>
        <end position="237"/>
    </location>
</feature>
<feature type="region of interest" description="Disordered" evidence="3">
    <location>
        <begin position="154"/>
        <end position="204"/>
    </location>
</feature>
<feature type="region of interest" description="Disordered" evidence="3">
    <location>
        <begin position="340"/>
        <end position="363"/>
    </location>
</feature>
<feature type="compositionally biased region" description="Basic residues" evidence="3">
    <location>
        <begin position="178"/>
        <end position="188"/>
    </location>
</feature>
<feature type="compositionally biased region" description="Polar residues" evidence="3">
    <location>
        <begin position="340"/>
        <end position="350"/>
    </location>
</feature>
<feature type="compositionally biased region" description="Basic residues" evidence="3">
    <location>
        <begin position="354"/>
        <end position="363"/>
    </location>
</feature>
<feature type="splice variant" id="VSP_036113" description="In isoform 2." evidence="12">
    <location>
        <begin position="1"/>
        <end position="17"/>
    </location>
</feature>
<feature type="strand" evidence="16">
    <location>
        <begin position="18"/>
        <end position="23"/>
    </location>
</feature>
<feature type="strand" evidence="16">
    <location>
        <begin position="26"/>
        <end position="33"/>
    </location>
</feature>
<feature type="helix" evidence="16">
    <location>
        <begin position="46"/>
        <end position="53"/>
    </location>
</feature>